<keyword id="KW-0963">Cytoplasm</keyword>
<keyword id="KW-0255">Endonuclease</keyword>
<keyword id="KW-0378">Hydrolase</keyword>
<keyword id="KW-0464">Manganese</keyword>
<keyword id="KW-0479">Metal-binding</keyword>
<keyword id="KW-0540">Nuclease</keyword>
<keyword id="KW-1185">Reference proteome</keyword>
<accession>Q8DPR3</accession>
<evidence type="ECO:0000255" key="1">
    <source>
        <dbReference type="HAMAP-Rule" id="MF_00052"/>
    </source>
</evidence>
<evidence type="ECO:0000255" key="2">
    <source>
        <dbReference type="PROSITE-ProRule" id="PRU01319"/>
    </source>
</evidence>
<proteinExistence type="inferred from homology"/>
<reference key="1">
    <citation type="journal article" date="2001" name="J. Bacteriol.">
        <title>Genome of the bacterium Streptococcus pneumoniae strain R6.</title>
        <authorList>
            <person name="Hoskins J."/>
            <person name="Alborn W.E. Jr."/>
            <person name="Arnold J."/>
            <person name="Blaszczak L.C."/>
            <person name="Burgett S."/>
            <person name="DeHoff B.S."/>
            <person name="Estrem S.T."/>
            <person name="Fritz L."/>
            <person name="Fu D.-J."/>
            <person name="Fuller W."/>
            <person name="Geringer C."/>
            <person name="Gilmour R."/>
            <person name="Glass J.S."/>
            <person name="Khoja H."/>
            <person name="Kraft A.R."/>
            <person name="Lagace R.E."/>
            <person name="LeBlanc D.J."/>
            <person name="Lee L.N."/>
            <person name="Lefkowitz E.J."/>
            <person name="Lu J."/>
            <person name="Matsushima P."/>
            <person name="McAhren S.M."/>
            <person name="McHenney M."/>
            <person name="McLeaster K."/>
            <person name="Mundy C.W."/>
            <person name="Nicas T.I."/>
            <person name="Norris F.H."/>
            <person name="O'Gara M."/>
            <person name="Peery R.B."/>
            <person name="Robertson G.T."/>
            <person name="Rockey P."/>
            <person name="Sun P.-M."/>
            <person name="Winkler M.E."/>
            <person name="Yang Y."/>
            <person name="Young-Bellido M."/>
            <person name="Zhao G."/>
            <person name="Zook C.A."/>
            <person name="Baltz R.H."/>
            <person name="Jaskunas S.R."/>
            <person name="Rosteck P.R. Jr."/>
            <person name="Skatrud P.L."/>
            <person name="Glass J.I."/>
        </authorList>
    </citation>
    <scope>NUCLEOTIDE SEQUENCE [LARGE SCALE GENOMIC DNA]</scope>
    <source>
        <strain>ATCC BAA-255 / R6</strain>
    </source>
</reference>
<dbReference type="EC" id="3.1.26.4" evidence="1"/>
<dbReference type="EMBL" id="AE007317">
    <property type="protein sequence ID" value="AAK99848.1"/>
    <property type="molecule type" value="Genomic_DNA"/>
</dbReference>
<dbReference type="PIR" id="D98002">
    <property type="entry name" value="D98002"/>
</dbReference>
<dbReference type="RefSeq" id="NP_358638.1">
    <property type="nucleotide sequence ID" value="NC_003098.1"/>
</dbReference>
<dbReference type="RefSeq" id="WP_000201141.1">
    <property type="nucleotide sequence ID" value="NC_003098.1"/>
</dbReference>
<dbReference type="SMR" id="Q8DPR3"/>
<dbReference type="STRING" id="171101.spr1044"/>
<dbReference type="KEGG" id="spr:spr1044"/>
<dbReference type="PATRIC" id="fig|171101.6.peg.1135"/>
<dbReference type="eggNOG" id="COG0164">
    <property type="taxonomic scope" value="Bacteria"/>
</dbReference>
<dbReference type="HOGENOM" id="CLU_036532_2_1_9"/>
<dbReference type="Proteomes" id="UP000000586">
    <property type="component" value="Chromosome"/>
</dbReference>
<dbReference type="GO" id="GO:0005737">
    <property type="term" value="C:cytoplasm"/>
    <property type="evidence" value="ECO:0007669"/>
    <property type="project" value="UniProtKB-SubCell"/>
</dbReference>
<dbReference type="GO" id="GO:0032299">
    <property type="term" value="C:ribonuclease H2 complex"/>
    <property type="evidence" value="ECO:0000318"/>
    <property type="project" value="GO_Central"/>
</dbReference>
<dbReference type="GO" id="GO:0030145">
    <property type="term" value="F:manganese ion binding"/>
    <property type="evidence" value="ECO:0007669"/>
    <property type="project" value="UniProtKB-UniRule"/>
</dbReference>
<dbReference type="GO" id="GO:0003723">
    <property type="term" value="F:RNA binding"/>
    <property type="evidence" value="ECO:0007669"/>
    <property type="project" value="InterPro"/>
</dbReference>
<dbReference type="GO" id="GO:0004523">
    <property type="term" value="F:RNA-DNA hybrid ribonuclease activity"/>
    <property type="evidence" value="ECO:0000318"/>
    <property type="project" value="GO_Central"/>
</dbReference>
<dbReference type="GO" id="GO:0043137">
    <property type="term" value="P:DNA replication, removal of RNA primer"/>
    <property type="evidence" value="ECO:0000318"/>
    <property type="project" value="GO_Central"/>
</dbReference>
<dbReference type="GO" id="GO:0006298">
    <property type="term" value="P:mismatch repair"/>
    <property type="evidence" value="ECO:0000318"/>
    <property type="project" value="GO_Central"/>
</dbReference>
<dbReference type="CDD" id="cd07182">
    <property type="entry name" value="RNase_HII_bacteria_HII_like"/>
    <property type="match status" value="1"/>
</dbReference>
<dbReference type="FunFam" id="3.30.420.10:FF:000006">
    <property type="entry name" value="Ribonuclease HII"/>
    <property type="match status" value="1"/>
</dbReference>
<dbReference type="Gene3D" id="3.30.420.10">
    <property type="entry name" value="Ribonuclease H-like superfamily/Ribonuclease H"/>
    <property type="match status" value="1"/>
</dbReference>
<dbReference type="HAMAP" id="MF_00052_B">
    <property type="entry name" value="RNase_HII_B"/>
    <property type="match status" value="1"/>
</dbReference>
<dbReference type="InterPro" id="IPR022898">
    <property type="entry name" value="RNase_HII"/>
</dbReference>
<dbReference type="InterPro" id="IPR001352">
    <property type="entry name" value="RNase_HII/HIII"/>
</dbReference>
<dbReference type="InterPro" id="IPR024567">
    <property type="entry name" value="RNase_HII/HIII_dom"/>
</dbReference>
<dbReference type="InterPro" id="IPR012337">
    <property type="entry name" value="RNaseH-like_sf"/>
</dbReference>
<dbReference type="InterPro" id="IPR036397">
    <property type="entry name" value="RNaseH_sf"/>
</dbReference>
<dbReference type="NCBIfam" id="NF000594">
    <property type="entry name" value="PRK00015.1-1"/>
    <property type="match status" value="1"/>
</dbReference>
<dbReference type="NCBIfam" id="NF000595">
    <property type="entry name" value="PRK00015.1-3"/>
    <property type="match status" value="1"/>
</dbReference>
<dbReference type="PANTHER" id="PTHR10954">
    <property type="entry name" value="RIBONUCLEASE H2 SUBUNIT A"/>
    <property type="match status" value="1"/>
</dbReference>
<dbReference type="PANTHER" id="PTHR10954:SF18">
    <property type="entry name" value="RIBONUCLEASE HII"/>
    <property type="match status" value="1"/>
</dbReference>
<dbReference type="Pfam" id="PF01351">
    <property type="entry name" value="RNase_HII"/>
    <property type="match status" value="1"/>
</dbReference>
<dbReference type="SUPFAM" id="SSF53098">
    <property type="entry name" value="Ribonuclease H-like"/>
    <property type="match status" value="1"/>
</dbReference>
<dbReference type="PROSITE" id="PS51975">
    <property type="entry name" value="RNASE_H_2"/>
    <property type="match status" value="1"/>
</dbReference>
<gene>
    <name evidence="1" type="primary">rnhB</name>
    <name type="ordered locus">spr1044</name>
</gene>
<sequence length="259" mass="28514">MATIKEIKELLVTVKELESPIFLELEKDNRSGVQKEISKRKRAIQAELDENLRLESMLSYEKELYKQGLTLIVGIDEVGRGPLAGPVVAAAVILPKNCKIKGLNDSKKIPKKKHLEIFQAVQDQALSIGIGIIDNQVIDQVNIYEATKLAMQEAISQLSPQPEHLLIDAMKLDLPISQTSIIKGDANSLSIAAASIVAKVTRDELMKEYDQQFPGYDFATNAGYGTAKHLEGLTKLGVTPIHRTSFEPVKSLVLGKKES</sequence>
<feature type="chain" id="PRO_0000111635" description="Ribonuclease HII">
    <location>
        <begin position="1"/>
        <end position="259"/>
    </location>
</feature>
<feature type="domain" description="RNase H type-2" evidence="2">
    <location>
        <begin position="70"/>
        <end position="258"/>
    </location>
</feature>
<feature type="binding site" evidence="1">
    <location>
        <position position="76"/>
    </location>
    <ligand>
        <name>a divalent metal cation</name>
        <dbReference type="ChEBI" id="CHEBI:60240"/>
    </ligand>
</feature>
<feature type="binding site" evidence="1">
    <location>
        <position position="77"/>
    </location>
    <ligand>
        <name>a divalent metal cation</name>
        <dbReference type="ChEBI" id="CHEBI:60240"/>
    </ligand>
</feature>
<feature type="binding site" evidence="1">
    <location>
        <position position="168"/>
    </location>
    <ligand>
        <name>a divalent metal cation</name>
        <dbReference type="ChEBI" id="CHEBI:60240"/>
    </ligand>
</feature>
<protein>
    <recommendedName>
        <fullName evidence="1">Ribonuclease HII</fullName>
        <shortName evidence="1">RNase HII</shortName>
        <ecNumber evidence="1">3.1.26.4</ecNumber>
    </recommendedName>
</protein>
<name>RNH2_STRR6</name>
<organism>
    <name type="scientific">Streptococcus pneumoniae (strain ATCC BAA-255 / R6)</name>
    <dbReference type="NCBI Taxonomy" id="171101"/>
    <lineage>
        <taxon>Bacteria</taxon>
        <taxon>Bacillati</taxon>
        <taxon>Bacillota</taxon>
        <taxon>Bacilli</taxon>
        <taxon>Lactobacillales</taxon>
        <taxon>Streptococcaceae</taxon>
        <taxon>Streptococcus</taxon>
    </lineage>
</organism>
<comment type="function">
    <text evidence="1">Endonuclease that specifically degrades the RNA of RNA-DNA hybrids.</text>
</comment>
<comment type="catalytic activity">
    <reaction evidence="1">
        <text>Endonucleolytic cleavage to 5'-phosphomonoester.</text>
        <dbReference type="EC" id="3.1.26.4"/>
    </reaction>
</comment>
<comment type="cofactor">
    <cofactor evidence="1">
        <name>Mn(2+)</name>
        <dbReference type="ChEBI" id="CHEBI:29035"/>
    </cofactor>
    <cofactor evidence="1">
        <name>Mg(2+)</name>
        <dbReference type="ChEBI" id="CHEBI:18420"/>
    </cofactor>
    <text evidence="1">Manganese or magnesium. Binds 1 divalent metal ion per monomer in the absence of substrate. May bind a second metal ion after substrate binding.</text>
</comment>
<comment type="subcellular location">
    <subcellularLocation>
        <location evidence="1">Cytoplasm</location>
    </subcellularLocation>
</comment>
<comment type="similarity">
    <text evidence="1">Belongs to the RNase HII family.</text>
</comment>